<reference key="1">
    <citation type="journal article" date="2003" name="Nucleic Acids Res.">
        <title>Genome sequence of Chlamydophila caviae (Chlamydia psittaci GPIC): examining the role of niche-specific genes in the evolution of the Chlamydiaceae.</title>
        <authorList>
            <person name="Read T.D."/>
            <person name="Myers G.S.A."/>
            <person name="Brunham R.C."/>
            <person name="Nelson W.C."/>
            <person name="Paulsen I.T."/>
            <person name="Heidelberg J.F."/>
            <person name="Holtzapple E.K."/>
            <person name="Khouri H.M."/>
            <person name="Federova N.B."/>
            <person name="Carty H.A."/>
            <person name="Umayam L.A."/>
            <person name="Haft D.H."/>
            <person name="Peterson J.D."/>
            <person name="Beanan M.J."/>
            <person name="White O."/>
            <person name="Salzberg S.L."/>
            <person name="Hsia R.-C."/>
            <person name="McClarty G."/>
            <person name="Rank R.G."/>
            <person name="Bavoil P.M."/>
            <person name="Fraser C.M."/>
        </authorList>
    </citation>
    <scope>NUCLEOTIDE SEQUENCE [LARGE SCALE GENOMIC DNA]</scope>
    <source>
        <strain>ATCC VR-813 / DSM 19441 / 03DC25 / GPIC</strain>
    </source>
</reference>
<evidence type="ECO:0000255" key="1">
    <source>
        <dbReference type="HAMAP-Rule" id="MF_00532"/>
    </source>
</evidence>
<evidence type="ECO:0000256" key="2">
    <source>
        <dbReference type="SAM" id="MobiDB-lite"/>
    </source>
</evidence>
<evidence type="ECO:0000305" key="3"/>
<dbReference type="EMBL" id="AE015925">
    <property type="protein sequence ID" value="AAP05276.1"/>
    <property type="molecule type" value="Genomic_DNA"/>
</dbReference>
<dbReference type="RefSeq" id="WP_011006491.1">
    <property type="nucleotide sequence ID" value="NC_003361.3"/>
</dbReference>
<dbReference type="SMR" id="Q822Z3"/>
<dbReference type="STRING" id="227941.CCA_00533"/>
<dbReference type="KEGG" id="cca:CCA_00533"/>
<dbReference type="eggNOG" id="COG0103">
    <property type="taxonomic scope" value="Bacteria"/>
</dbReference>
<dbReference type="HOGENOM" id="CLU_046483_2_1_0"/>
<dbReference type="OrthoDB" id="9803965at2"/>
<dbReference type="Proteomes" id="UP000002193">
    <property type="component" value="Chromosome"/>
</dbReference>
<dbReference type="GO" id="GO:0022627">
    <property type="term" value="C:cytosolic small ribosomal subunit"/>
    <property type="evidence" value="ECO:0007669"/>
    <property type="project" value="TreeGrafter"/>
</dbReference>
<dbReference type="GO" id="GO:0003723">
    <property type="term" value="F:RNA binding"/>
    <property type="evidence" value="ECO:0007669"/>
    <property type="project" value="TreeGrafter"/>
</dbReference>
<dbReference type="GO" id="GO:0003735">
    <property type="term" value="F:structural constituent of ribosome"/>
    <property type="evidence" value="ECO:0007669"/>
    <property type="project" value="InterPro"/>
</dbReference>
<dbReference type="GO" id="GO:0006412">
    <property type="term" value="P:translation"/>
    <property type="evidence" value="ECO:0007669"/>
    <property type="project" value="UniProtKB-UniRule"/>
</dbReference>
<dbReference type="FunFam" id="3.30.230.10:FF:000001">
    <property type="entry name" value="30S ribosomal protein S9"/>
    <property type="match status" value="1"/>
</dbReference>
<dbReference type="Gene3D" id="3.30.230.10">
    <property type="match status" value="1"/>
</dbReference>
<dbReference type="HAMAP" id="MF_00532_B">
    <property type="entry name" value="Ribosomal_uS9_B"/>
    <property type="match status" value="1"/>
</dbReference>
<dbReference type="InterPro" id="IPR020568">
    <property type="entry name" value="Ribosomal_Su5_D2-typ_SF"/>
</dbReference>
<dbReference type="InterPro" id="IPR000754">
    <property type="entry name" value="Ribosomal_uS9"/>
</dbReference>
<dbReference type="InterPro" id="IPR023035">
    <property type="entry name" value="Ribosomal_uS9_bac/plastid"/>
</dbReference>
<dbReference type="InterPro" id="IPR020574">
    <property type="entry name" value="Ribosomal_uS9_CS"/>
</dbReference>
<dbReference type="InterPro" id="IPR014721">
    <property type="entry name" value="Ribsml_uS5_D2-typ_fold_subgr"/>
</dbReference>
<dbReference type="NCBIfam" id="NF001099">
    <property type="entry name" value="PRK00132.1"/>
    <property type="match status" value="1"/>
</dbReference>
<dbReference type="PANTHER" id="PTHR21569">
    <property type="entry name" value="RIBOSOMAL PROTEIN S9"/>
    <property type="match status" value="1"/>
</dbReference>
<dbReference type="PANTHER" id="PTHR21569:SF1">
    <property type="entry name" value="SMALL RIBOSOMAL SUBUNIT PROTEIN US9M"/>
    <property type="match status" value="1"/>
</dbReference>
<dbReference type="Pfam" id="PF00380">
    <property type="entry name" value="Ribosomal_S9"/>
    <property type="match status" value="1"/>
</dbReference>
<dbReference type="SUPFAM" id="SSF54211">
    <property type="entry name" value="Ribosomal protein S5 domain 2-like"/>
    <property type="match status" value="1"/>
</dbReference>
<dbReference type="PROSITE" id="PS00360">
    <property type="entry name" value="RIBOSOMAL_S9"/>
    <property type="match status" value="1"/>
</dbReference>
<organism>
    <name type="scientific">Chlamydia caviae (strain ATCC VR-813 / DSM 19441 / 03DC25 / GPIC)</name>
    <name type="common">Chlamydophila caviae</name>
    <dbReference type="NCBI Taxonomy" id="227941"/>
    <lineage>
        <taxon>Bacteria</taxon>
        <taxon>Pseudomonadati</taxon>
        <taxon>Chlamydiota</taxon>
        <taxon>Chlamydiia</taxon>
        <taxon>Chlamydiales</taxon>
        <taxon>Chlamydiaceae</taxon>
        <taxon>Chlamydia/Chlamydophila group</taxon>
        <taxon>Chlamydia</taxon>
    </lineage>
</organism>
<proteinExistence type="inferred from homology"/>
<accession>Q822Z3</accession>
<keyword id="KW-0687">Ribonucleoprotein</keyword>
<keyword id="KW-0689">Ribosomal protein</keyword>
<feature type="chain" id="PRO_0000111341" description="Small ribosomal subunit protein uS9">
    <location>
        <begin position="1"/>
        <end position="134"/>
    </location>
</feature>
<feature type="region of interest" description="Disordered" evidence="2">
    <location>
        <begin position="98"/>
        <end position="134"/>
    </location>
</feature>
<feature type="compositionally biased region" description="Basic and acidic residues" evidence="2">
    <location>
        <begin position="98"/>
        <end position="114"/>
    </location>
</feature>
<feature type="compositionally biased region" description="Basic residues" evidence="2">
    <location>
        <begin position="115"/>
        <end position="134"/>
    </location>
</feature>
<comment type="similarity">
    <text evidence="1">Belongs to the universal ribosomal protein uS9 family.</text>
</comment>
<sequence length="134" mass="15107">MVKNTIEESVATGRRKQAVSSVRLRPGTGKIDVNGKAFEEYFPLEIQRVTILSPLMKVLGTTNECDLIIRINGGGIQGQVIATRLGLARALLKKNVDSKQELKSHGFLTRDPRKKERKKYGHKKARKSFQFSKR</sequence>
<name>RS9_CHLCV</name>
<gene>
    <name evidence="1" type="primary">rpsI</name>
    <name type="ordered locus">CCA_00533</name>
</gene>
<protein>
    <recommendedName>
        <fullName evidence="1">Small ribosomal subunit protein uS9</fullName>
    </recommendedName>
    <alternativeName>
        <fullName evidence="3">30S ribosomal protein S9</fullName>
    </alternativeName>
</protein>